<protein>
    <recommendedName>
        <fullName evidence="1">Adenosylhomocysteinase</fullName>
        <ecNumber evidence="1">3.13.2.1</ecNumber>
    </recommendedName>
    <alternativeName>
        <fullName evidence="1">S-adenosyl-L-homocysteine hydrolase</fullName>
        <shortName evidence="1">AdoHcyase</shortName>
    </alternativeName>
</protein>
<sequence length="476" mass="52368">MLAASASTQQLHNHIEYEIADIELAEFGRKELAIAEKEMPGLMALREKYHKEKPLKGARIAGSLHMTIQTAVLIETLVALGAQVRWASCNIFSTQDHAAAAIASSGIPVFAKKGETLDEYWAYTHRILEWGDQETPNMILDDGGDATGLVILGSKAEQDLSVLERPNNEEEIALYSSIRNKLSDDPSFYSRIKSSIQGVTEETTTGVARLYQMQANGSLPFPAINVNDSVTKSKFDNLYGCRESLVDGIKRATDVMVAGKIALVIGYGDVGKGSAQSLRGLGATVMIAEIDPICALQASMEGYRVVRLNDVVQNVDIFVTATGNFNVITHDHLIRMKDEAIVCNIGHFDNEIDVASLKPYQWENIKPQVDHITLPSGNKIILLAEGRLVNLGCATGHPSFVMSNSFTNQVLAQIELFTQGSNYDNQVYILPKHLDELVARLHLDKIGANLTELTEEQAAYINVPIKGPYKSEQYRY</sequence>
<evidence type="ECO:0000255" key="1">
    <source>
        <dbReference type="HAMAP-Rule" id="MF_00563"/>
    </source>
</evidence>
<comment type="function">
    <text evidence="1">May play a key role in the regulation of the intracellular concentration of adenosylhomocysteine.</text>
</comment>
<comment type="catalytic activity">
    <reaction evidence="1">
        <text>S-adenosyl-L-homocysteine + H2O = L-homocysteine + adenosine</text>
        <dbReference type="Rhea" id="RHEA:21708"/>
        <dbReference type="ChEBI" id="CHEBI:15377"/>
        <dbReference type="ChEBI" id="CHEBI:16335"/>
        <dbReference type="ChEBI" id="CHEBI:57856"/>
        <dbReference type="ChEBI" id="CHEBI:58199"/>
        <dbReference type="EC" id="3.13.2.1"/>
    </reaction>
</comment>
<comment type="cofactor">
    <cofactor evidence="1">
        <name>NAD(+)</name>
        <dbReference type="ChEBI" id="CHEBI:57540"/>
    </cofactor>
    <text evidence="1">Binds 1 NAD(+) per subunit.</text>
</comment>
<comment type="pathway">
    <text evidence="1">Amino-acid biosynthesis; L-homocysteine biosynthesis; L-homocysteine from S-adenosyl-L-homocysteine: step 1/1.</text>
</comment>
<comment type="subcellular location">
    <subcellularLocation>
        <location evidence="1">Cytoplasm</location>
    </subcellularLocation>
</comment>
<comment type="similarity">
    <text evidence="1">Belongs to the adenosylhomocysteinase family.</text>
</comment>
<name>SAHH_PROM4</name>
<keyword id="KW-0963">Cytoplasm</keyword>
<keyword id="KW-0378">Hydrolase</keyword>
<keyword id="KW-0520">NAD</keyword>
<keyword id="KW-0554">One-carbon metabolism</keyword>
<keyword id="KW-1185">Reference proteome</keyword>
<proteinExistence type="inferred from homology"/>
<accession>A9BD69</accession>
<gene>
    <name evidence="1" type="primary">ahcY</name>
    <name type="ordered locus">P9211_17511</name>
</gene>
<feature type="chain" id="PRO_1000129294" description="Adenosylhomocysteinase">
    <location>
        <begin position="1"/>
        <end position="476"/>
    </location>
</feature>
<feature type="binding site" evidence="1">
    <location>
        <position position="67"/>
    </location>
    <ligand>
        <name>substrate</name>
    </ligand>
</feature>
<feature type="binding site" evidence="1">
    <location>
        <position position="142"/>
    </location>
    <ligand>
        <name>substrate</name>
    </ligand>
</feature>
<feature type="binding site" evidence="1">
    <location>
        <position position="202"/>
    </location>
    <ligand>
        <name>substrate</name>
    </ligand>
</feature>
<feature type="binding site" evidence="1">
    <location>
        <begin position="203"/>
        <end position="205"/>
    </location>
    <ligand>
        <name>NAD(+)</name>
        <dbReference type="ChEBI" id="CHEBI:57540"/>
    </ligand>
</feature>
<feature type="binding site" evidence="1">
    <location>
        <position position="232"/>
    </location>
    <ligand>
        <name>substrate</name>
    </ligand>
</feature>
<feature type="binding site" evidence="1">
    <location>
        <position position="236"/>
    </location>
    <ligand>
        <name>substrate</name>
    </ligand>
</feature>
<feature type="binding site" evidence="1">
    <location>
        <position position="237"/>
    </location>
    <ligand>
        <name>NAD(+)</name>
        <dbReference type="ChEBI" id="CHEBI:57540"/>
    </ligand>
</feature>
<feature type="binding site" evidence="1">
    <location>
        <begin position="266"/>
        <end position="271"/>
    </location>
    <ligand>
        <name>NAD(+)</name>
        <dbReference type="ChEBI" id="CHEBI:57540"/>
    </ligand>
</feature>
<feature type="binding site" evidence="1">
    <location>
        <position position="289"/>
    </location>
    <ligand>
        <name>NAD(+)</name>
        <dbReference type="ChEBI" id="CHEBI:57540"/>
    </ligand>
</feature>
<feature type="binding site" evidence="1">
    <location>
        <position position="324"/>
    </location>
    <ligand>
        <name>NAD(+)</name>
        <dbReference type="ChEBI" id="CHEBI:57540"/>
    </ligand>
</feature>
<feature type="binding site" evidence="1">
    <location>
        <begin position="345"/>
        <end position="347"/>
    </location>
    <ligand>
        <name>NAD(+)</name>
        <dbReference type="ChEBI" id="CHEBI:57540"/>
    </ligand>
</feature>
<feature type="binding site" evidence="1">
    <location>
        <position position="390"/>
    </location>
    <ligand>
        <name>NAD(+)</name>
        <dbReference type="ChEBI" id="CHEBI:57540"/>
    </ligand>
</feature>
<organism>
    <name type="scientific">Prochlorococcus marinus (strain MIT 9211)</name>
    <dbReference type="NCBI Taxonomy" id="93059"/>
    <lineage>
        <taxon>Bacteria</taxon>
        <taxon>Bacillati</taxon>
        <taxon>Cyanobacteriota</taxon>
        <taxon>Cyanophyceae</taxon>
        <taxon>Synechococcales</taxon>
        <taxon>Prochlorococcaceae</taxon>
        <taxon>Prochlorococcus</taxon>
    </lineage>
</organism>
<dbReference type="EC" id="3.13.2.1" evidence="1"/>
<dbReference type="EMBL" id="CP000878">
    <property type="protein sequence ID" value="ABX09682.1"/>
    <property type="molecule type" value="Genomic_DNA"/>
</dbReference>
<dbReference type="RefSeq" id="WP_012196302.1">
    <property type="nucleotide sequence ID" value="NC_009976.1"/>
</dbReference>
<dbReference type="SMR" id="A9BD69"/>
<dbReference type="STRING" id="93059.P9211_17511"/>
<dbReference type="KEGG" id="pmj:P9211_17511"/>
<dbReference type="eggNOG" id="COG0499">
    <property type="taxonomic scope" value="Bacteria"/>
</dbReference>
<dbReference type="HOGENOM" id="CLU_025194_2_1_3"/>
<dbReference type="OrthoDB" id="9802717at2"/>
<dbReference type="UniPathway" id="UPA00314">
    <property type="reaction ID" value="UER00076"/>
</dbReference>
<dbReference type="Proteomes" id="UP000000788">
    <property type="component" value="Chromosome"/>
</dbReference>
<dbReference type="GO" id="GO:0005829">
    <property type="term" value="C:cytosol"/>
    <property type="evidence" value="ECO:0007669"/>
    <property type="project" value="TreeGrafter"/>
</dbReference>
<dbReference type="GO" id="GO:0004013">
    <property type="term" value="F:adenosylhomocysteinase activity"/>
    <property type="evidence" value="ECO:0007669"/>
    <property type="project" value="UniProtKB-UniRule"/>
</dbReference>
<dbReference type="GO" id="GO:0071269">
    <property type="term" value="P:L-homocysteine biosynthetic process"/>
    <property type="evidence" value="ECO:0007669"/>
    <property type="project" value="UniProtKB-UniRule"/>
</dbReference>
<dbReference type="GO" id="GO:0006730">
    <property type="term" value="P:one-carbon metabolic process"/>
    <property type="evidence" value="ECO:0007669"/>
    <property type="project" value="UniProtKB-KW"/>
</dbReference>
<dbReference type="GO" id="GO:0033353">
    <property type="term" value="P:S-adenosylmethionine cycle"/>
    <property type="evidence" value="ECO:0007669"/>
    <property type="project" value="TreeGrafter"/>
</dbReference>
<dbReference type="CDD" id="cd00401">
    <property type="entry name" value="SAHH"/>
    <property type="match status" value="1"/>
</dbReference>
<dbReference type="FunFam" id="3.40.50.720:FF:000004">
    <property type="entry name" value="Adenosylhomocysteinase"/>
    <property type="match status" value="1"/>
</dbReference>
<dbReference type="Gene3D" id="3.40.50.1480">
    <property type="entry name" value="Adenosylhomocysteinase-like"/>
    <property type="match status" value="1"/>
</dbReference>
<dbReference type="Gene3D" id="3.40.50.720">
    <property type="entry name" value="NAD(P)-binding Rossmann-like Domain"/>
    <property type="match status" value="1"/>
</dbReference>
<dbReference type="HAMAP" id="MF_00563">
    <property type="entry name" value="AdoHcyase"/>
    <property type="match status" value="1"/>
</dbReference>
<dbReference type="InterPro" id="IPR042172">
    <property type="entry name" value="Adenosylhomocyst_ase-like_sf"/>
</dbReference>
<dbReference type="InterPro" id="IPR000043">
    <property type="entry name" value="Adenosylhomocysteinase-like"/>
</dbReference>
<dbReference type="InterPro" id="IPR015878">
    <property type="entry name" value="Ado_hCys_hydrolase_NAD-bd"/>
</dbReference>
<dbReference type="InterPro" id="IPR036291">
    <property type="entry name" value="NAD(P)-bd_dom_sf"/>
</dbReference>
<dbReference type="InterPro" id="IPR020082">
    <property type="entry name" value="S-Ado-L-homoCys_hydrolase_CS"/>
</dbReference>
<dbReference type="NCBIfam" id="TIGR00936">
    <property type="entry name" value="ahcY"/>
    <property type="match status" value="1"/>
</dbReference>
<dbReference type="NCBIfam" id="NF004005">
    <property type="entry name" value="PRK05476.2-3"/>
    <property type="match status" value="1"/>
</dbReference>
<dbReference type="PANTHER" id="PTHR23420">
    <property type="entry name" value="ADENOSYLHOMOCYSTEINASE"/>
    <property type="match status" value="1"/>
</dbReference>
<dbReference type="PANTHER" id="PTHR23420:SF0">
    <property type="entry name" value="ADENOSYLHOMOCYSTEINASE"/>
    <property type="match status" value="1"/>
</dbReference>
<dbReference type="Pfam" id="PF05221">
    <property type="entry name" value="AdoHcyase"/>
    <property type="match status" value="1"/>
</dbReference>
<dbReference type="Pfam" id="PF00670">
    <property type="entry name" value="AdoHcyase_NAD"/>
    <property type="match status" value="1"/>
</dbReference>
<dbReference type="PIRSF" id="PIRSF001109">
    <property type="entry name" value="Ad_hcy_hydrolase"/>
    <property type="match status" value="1"/>
</dbReference>
<dbReference type="SMART" id="SM00996">
    <property type="entry name" value="AdoHcyase"/>
    <property type="match status" value="1"/>
</dbReference>
<dbReference type="SMART" id="SM00997">
    <property type="entry name" value="AdoHcyase_NAD"/>
    <property type="match status" value="1"/>
</dbReference>
<dbReference type="SUPFAM" id="SSF52283">
    <property type="entry name" value="Formate/glycerate dehydrogenase catalytic domain-like"/>
    <property type="match status" value="1"/>
</dbReference>
<dbReference type="SUPFAM" id="SSF51735">
    <property type="entry name" value="NAD(P)-binding Rossmann-fold domains"/>
    <property type="match status" value="1"/>
</dbReference>
<dbReference type="PROSITE" id="PS00738">
    <property type="entry name" value="ADOHCYASE_1"/>
    <property type="match status" value="1"/>
</dbReference>
<dbReference type="PROSITE" id="PS00739">
    <property type="entry name" value="ADOHCYASE_2"/>
    <property type="match status" value="1"/>
</dbReference>
<reference key="1">
    <citation type="journal article" date="2007" name="PLoS Genet.">
        <title>Patterns and implications of gene gain and loss in the evolution of Prochlorococcus.</title>
        <authorList>
            <person name="Kettler G.C."/>
            <person name="Martiny A.C."/>
            <person name="Huang K."/>
            <person name="Zucker J."/>
            <person name="Coleman M.L."/>
            <person name="Rodrigue S."/>
            <person name="Chen F."/>
            <person name="Lapidus A."/>
            <person name="Ferriera S."/>
            <person name="Johnson J."/>
            <person name="Steglich C."/>
            <person name="Church G.M."/>
            <person name="Richardson P."/>
            <person name="Chisholm S.W."/>
        </authorList>
    </citation>
    <scope>NUCLEOTIDE SEQUENCE [LARGE SCALE GENOMIC DNA]</scope>
    <source>
        <strain>MIT 9211</strain>
    </source>
</reference>